<feature type="chain" id="PRO_0000411278" description="3-dehydroquinate synthase">
    <location>
        <begin position="1"/>
        <end position="357"/>
    </location>
</feature>
<feature type="binding site" evidence="1">
    <location>
        <begin position="104"/>
        <end position="108"/>
    </location>
    <ligand>
        <name>NAD(+)</name>
        <dbReference type="ChEBI" id="CHEBI:57540"/>
    </ligand>
</feature>
<feature type="binding site" evidence="1">
    <location>
        <begin position="128"/>
        <end position="129"/>
    </location>
    <ligand>
        <name>NAD(+)</name>
        <dbReference type="ChEBI" id="CHEBI:57540"/>
    </ligand>
</feature>
<feature type="binding site" evidence="1">
    <location>
        <position position="141"/>
    </location>
    <ligand>
        <name>NAD(+)</name>
        <dbReference type="ChEBI" id="CHEBI:57540"/>
    </ligand>
</feature>
<feature type="binding site" evidence="1">
    <location>
        <begin position="168"/>
        <end position="171"/>
    </location>
    <ligand>
        <name>NAD(+)</name>
        <dbReference type="ChEBI" id="CHEBI:57540"/>
    </ligand>
</feature>
<feature type="binding site" evidence="1">
    <location>
        <position position="183"/>
    </location>
    <ligand>
        <name>Zn(2+)</name>
        <dbReference type="ChEBI" id="CHEBI:29105"/>
    </ligand>
</feature>
<feature type="binding site" evidence="1">
    <location>
        <position position="243"/>
    </location>
    <ligand>
        <name>Zn(2+)</name>
        <dbReference type="ChEBI" id="CHEBI:29105"/>
    </ligand>
</feature>
<feature type="binding site" evidence="1">
    <location>
        <position position="260"/>
    </location>
    <ligand>
        <name>Zn(2+)</name>
        <dbReference type="ChEBI" id="CHEBI:29105"/>
    </ligand>
</feature>
<proteinExistence type="inferred from homology"/>
<reference key="1">
    <citation type="journal article" date="2003" name="Genome Res.">
        <title>Genome sequence of an M3 strain of Streptococcus pyogenes reveals a large-scale genomic rearrangement in invasive strains and new insights into phage evolution.</title>
        <authorList>
            <person name="Nakagawa I."/>
            <person name="Kurokawa K."/>
            <person name="Yamashita A."/>
            <person name="Nakata M."/>
            <person name="Tomiyasu Y."/>
            <person name="Okahashi N."/>
            <person name="Kawabata S."/>
            <person name="Yamazaki K."/>
            <person name="Shiba T."/>
            <person name="Yasunaga T."/>
            <person name="Hayashi H."/>
            <person name="Hattori M."/>
            <person name="Hamada S."/>
        </authorList>
    </citation>
    <scope>NUCLEOTIDE SEQUENCE [LARGE SCALE GENOMIC DNA]</scope>
    <source>
        <strain>SSI-1</strain>
    </source>
</reference>
<evidence type="ECO:0000255" key="1">
    <source>
        <dbReference type="HAMAP-Rule" id="MF_00110"/>
    </source>
</evidence>
<evidence type="ECO:0000305" key="2"/>
<sequence length="357" mass="40409">MPQTLHVHSRVKDYDILFTDHVLKTLADCLGERKQRKLLFITDQTVYHLYQTLFEEFAQQYNAFVHVYPSGGQSKSLERVSAIYDQLIAENFSKKDMIVTIGGGVVGDLGGFVAATYYRGIPYIQIPTTLLSQVDSSIGGKVGVHFKGLTNMIGSIYPPEAIIISTTFLETLPQREFSCGISEMLKIGFIHDRPLFQQLRDFQKETDKQGLERLIYQSISNKKRIVEQDEFENGLRMSLNFGHTLGHAIESLCHHDFYHHGEAIAIGMVVDAKLAVSKGLLPKEDLDSLLQVFERYQLPTTLERADVSATSLFDVFKTDKKNSEQHIIFILPTETGFTTLAINKDDHQFVEKLDSLL</sequence>
<accession>P0CZ81</accession>
<accession>Q8K6M3</accession>
<dbReference type="EC" id="4.2.3.4" evidence="1"/>
<dbReference type="EMBL" id="BA000034">
    <property type="protein sequence ID" value="BAC63677.1"/>
    <property type="status" value="ALT_INIT"/>
    <property type="molecule type" value="Genomic_DNA"/>
</dbReference>
<dbReference type="RefSeq" id="WP_011054780.1">
    <property type="nucleotide sequence ID" value="NC_004606.1"/>
</dbReference>
<dbReference type="SMR" id="P0CZ81"/>
<dbReference type="KEGG" id="sps:SPs0582"/>
<dbReference type="HOGENOM" id="CLU_001201_0_1_9"/>
<dbReference type="UniPathway" id="UPA00053">
    <property type="reaction ID" value="UER00085"/>
</dbReference>
<dbReference type="GO" id="GO:0005737">
    <property type="term" value="C:cytoplasm"/>
    <property type="evidence" value="ECO:0007669"/>
    <property type="project" value="UniProtKB-SubCell"/>
</dbReference>
<dbReference type="GO" id="GO:0003856">
    <property type="term" value="F:3-dehydroquinate synthase activity"/>
    <property type="evidence" value="ECO:0007669"/>
    <property type="project" value="UniProtKB-UniRule"/>
</dbReference>
<dbReference type="GO" id="GO:0046872">
    <property type="term" value="F:metal ion binding"/>
    <property type="evidence" value="ECO:0007669"/>
    <property type="project" value="UniProtKB-KW"/>
</dbReference>
<dbReference type="GO" id="GO:0000166">
    <property type="term" value="F:nucleotide binding"/>
    <property type="evidence" value="ECO:0007669"/>
    <property type="project" value="UniProtKB-KW"/>
</dbReference>
<dbReference type="GO" id="GO:0008652">
    <property type="term" value="P:amino acid biosynthetic process"/>
    <property type="evidence" value="ECO:0007669"/>
    <property type="project" value="UniProtKB-KW"/>
</dbReference>
<dbReference type="GO" id="GO:0009073">
    <property type="term" value="P:aromatic amino acid family biosynthetic process"/>
    <property type="evidence" value="ECO:0007669"/>
    <property type="project" value="UniProtKB-KW"/>
</dbReference>
<dbReference type="GO" id="GO:0009423">
    <property type="term" value="P:chorismate biosynthetic process"/>
    <property type="evidence" value="ECO:0007669"/>
    <property type="project" value="UniProtKB-UniRule"/>
</dbReference>
<dbReference type="CDD" id="cd08195">
    <property type="entry name" value="DHQS"/>
    <property type="match status" value="1"/>
</dbReference>
<dbReference type="FunFam" id="3.40.50.1970:FF:000007">
    <property type="entry name" value="Pentafunctional AROM polypeptide"/>
    <property type="match status" value="1"/>
</dbReference>
<dbReference type="Gene3D" id="3.40.50.1970">
    <property type="match status" value="1"/>
</dbReference>
<dbReference type="Gene3D" id="1.20.1090.10">
    <property type="entry name" value="Dehydroquinate synthase-like - alpha domain"/>
    <property type="match status" value="1"/>
</dbReference>
<dbReference type="HAMAP" id="MF_00110">
    <property type="entry name" value="DHQ_synthase"/>
    <property type="match status" value="1"/>
</dbReference>
<dbReference type="InterPro" id="IPR050071">
    <property type="entry name" value="Dehydroquinate_synthase"/>
</dbReference>
<dbReference type="InterPro" id="IPR016037">
    <property type="entry name" value="DHQ_synth_AroB"/>
</dbReference>
<dbReference type="InterPro" id="IPR030963">
    <property type="entry name" value="DHQ_synth_fam"/>
</dbReference>
<dbReference type="InterPro" id="IPR030960">
    <property type="entry name" value="DHQS/DOIS_N"/>
</dbReference>
<dbReference type="InterPro" id="IPR056179">
    <property type="entry name" value="DHQS_C"/>
</dbReference>
<dbReference type="NCBIfam" id="TIGR01357">
    <property type="entry name" value="aroB"/>
    <property type="match status" value="1"/>
</dbReference>
<dbReference type="PANTHER" id="PTHR43622">
    <property type="entry name" value="3-DEHYDROQUINATE SYNTHASE"/>
    <property type="match status" value="1"/>
</dbReference>
<dbReference type="PANTHER" id="PTHR43622:SF1">
    <property type="entry name" value="3-DEHYDROQUINATE SYNTHASE"/>
    <property type="match status" value="1"/>
</dbReference>
<dbReference type="Pfam" id="PF01761">
    <property type="entry name" value="DHQ_synthase"/>
    <property type="match status" value="1"/>
</dbReference>
<dbReference type="Pfam" id="PF24621">
    <property type="entry name" value="DHQS_C"/>
    <property type="match status" value="1"/>
</dbReference>
<dbReference type="PIRSF" id="PIRSF001455">
    <property type="entry name" value="DHQ_synth"/>
    <property type="match status" value="1"/>
</dbReference>
<dbReference type="SUPFAM" id="SSF56796">
    <property type="entry name" value="Dehydroquinate synthase-like"/>
    <property type="match status" value="1"/>
</dbReference>
<organism>
    <name type="scientific">Streptococcus pyogenes serotype M3 (strain SSI-1)</name>
    <dbReference type="NCBI Taxonomy" id="193567"/>
    <lineage>
        <taxon>Bacteria</taxon>
        <taxon>Bacillati</taxon>
        <taxon>Bacillota</taxon>
        <taxon>Bacilli</taxon>
        <taxon>Lactobacillales</taxon>
        <taxon>Streptococcaceae</taxon>
        <taxon>Streptococcus</taxon>
    </lineage>
</organism>
<name>AROB_STRPQ</name>
<keyword id="KW-0028">Amino-acid biosynthesis</keyword>
<keyword id="KW-0057">Aromatic amino acid biosynthesis</keyword>
<keyword id="KW-0170">Cobalt</keyword>
<keyword id="KW-0963">Cytoplasm</keyword>
<keyword id="KW-0456">Lyase</keyword>
<keyword id="KW-0479">Metal-binding</keyword>
<keyword id="KW-0520">NAD</keyword>
<keyword id="KW-0547">Nucleotide-binding</keyword>
<keyword id="KW-0862">Zinc</keyword>
<gene>
    <name evidence="1" type="primary">aroB</name>
    <name type="ordered locus">SPs0582</name>
</gene>
<comment type="function">
    <text evidence="1">Catalyzes the conversion of 3-deoxy-D-arabino-heptulosonate 7-phosphate (DAHP) to dehydroquinate (DHQ).</text>
</comment>
<comment type="catalytic activity">
    <reaction evidence="1">
        <text>7-phospho-2-dehydro-3-deoxy-D-arabino-heptonate = 3-dehydroquinate + phosphate</text>
        <dbReference type="Rhea" id="RHEA:21968"/>
        <dbReference type="ChEBI" id="CHEBI:32364"/>
        <dbReference type="ChEBI" id="CHEBI:43474"/>
        <dbReference type="ChEBI" id="CHEBI:58394"/>
        <dbReference type="EC" id="4.2.3.4"/>
    </reaction>
</comment>
<comment type="cofactor">
    <cofactor evidence="1">
        <name>NAD(+)</name>
        <dbReference type="ChEBI" id="CHEBI:57540"/>
    </cofactor>
</comment>
<comment type="cofactor">
    <cofactor evidence="1">
        <name>Co(2+)</name>
        <dbReference type="ChEBI" id="CHEBI:48828"/>
    </cofactor>
    <cofactor evidence="1">
        <name>Zn(2+)</name>
        <dbReference type="ChEBI" id="CHEBI:29105"/>
    </cofactor>
    <text evidence="1">Binds 1 divalent metal cation per subunit. Can use either Co(2+) or Zn(2+).</text>
</comment>
<comment type="pathway">
    <text evidence="1">Metabolic intermediate biosynthesis; chorismate biosynthesis; chorismate from D-erythrose 4-phosphate and phosphoenolpyruvate: step 2/7.</text>
</comment>
<comment type="subcellular location">
    <subcellularLocation>
        <location evidence="1">Cytoplasm</location>
    </subcellularLocation>
</comment>
<comment type="similarity">
    <text evidence="1">Belongs to the sugar phosphate cyclases superfamily. Dehydroquinate synthase family.</text>
</comment>
<comment type="sequence caution" evidence="2">
    <conflict type="erroneous initiation">
        <sequence resource="EMBL-CDS" id="BAC63677"/>
    </conflict>
</comment>
<protein>
    <recommendedName>
        <fullName evidence="1">3-dehydroquinate synthase</fullName>
        <shortName evidence="1">DHQS</shortName>
        <ecNumber evidence="1">4.2.3.4</ecNumber>
    </recommendedName>
</protein>